<comment type="function">
    <text evidence="1">Catalyzes the transfer of endogenously produced octanoic acid from octanoyl-acyl-carrier-protein onto the lipoyl domains of lipoate-dependent enzymes. Lipoyl-ACP can also act as a substrate although octanoyl-ACP is likely to be the physiological substrate.</text>
</comment>
<comment type="catalytic activity">
    <reaction evidence="1">
        <text>octanoyl-[ACP] + L-lysyl-[protein] = N(6)-octanoyl-L-lysyl-[protein] + holo-[ACP] + H(+)</text>
        <dbReference type="Rhea" id="RHEA:17665"/>
        <dbReference type="Rhea" id="RHEA-COMP:9636"/>
        <dbReference type="Rhea" id="RHEA-COMP:9685"/>
        <dbReference type="Rhea" id="RHEA-COMP:9752"/>
        <dbReference type="Rhea" id="RHEA-COMP:9928"/>
        <dbReference type="ChEBI" id="CHEBI:15378"/>
        <dbReference type="ChEBI" id="CHEBI:29969"/>
        <dbReference type="ChEBI" id="CHEBI:64479"/>
        <dbReference type="ChEBI" id="CHEBI:78463"/>
        <dbReference type="ChEBI" id="CHEBI:78809"/>
        <dbReference type="EC" id="2.3.1.181"/>
    </reaction>
</comment>
<comment type="pathway">
    <text evidence="1">Protein modification; protein lipoylation via endogenous pathway; protein N(6)-(lipoyl)lysine from octanoyl-[acyl-carrier-protein]: step 1/2.</text>
</comment>
<comment type="subcellular location">
    <subcellularLocation>
        <location evidence="1">Cytoplasm</location>
    </subcellularLocation>
</comment>
<comment type="miscellaneous">
    <text evidence="1">In the reaction, the free carboxyl group of octanoic acid is attached via an amide linkage to the epsilon-amino group of a specific lysine residue of lipoyl domains of lipoate-dependent enzymes.</text>
</comment>
<comment type="similarity">
    <text evidence="1">Belongs to the LipB family.</text>
</comment>
<gene>
    <name evidence="1" type="primary">lipB</name>
    <name type="ordered locus">CC_2176</name>
</gene>
<keyword id="KW-0012">Acyltransferase</keyword>
<keyword id="KW-0963">Cytoplasm</keyword>
<keyword id="KW-1185">Reference proteome</keyword>
<keyword id="KW-0808">Transferase</keyword>
<protein>
    <recommendedName>
        <fullName evidence="1">Octanoyltransferase</fullName>
        <ecNumber evidence="1">2.3.1.181</ecNumber>
    </recommendedName>
    <alternativeName>
        <fullName evidence="1">Lipoate-protein ligase B</fullName>
    </alternativeName>
    <alternativeName>
        <fullName evidence="1">Lipoyl/octanoyl transferase</fullName>
    </alternativeName>
    <alternativeName>
        <fullName evidence="1">Octanoyl-[acyl-carrier-protein]-protein N-octanoyltransferase</fullName>
    </alternativeName>
</protein>
<dbReference type="EC" id="2.3.1.181" evidence="1"/>
<dbReference type="EMBL" id="AE005673">
    <property type="protein sequence ID" value="AAK24147.1"/>
    <property type="molecule type" value="Genomic_DNA"/>
</dbReference>
<dbReference type="PIR" id="G87518">
    <property type="entry name" value="G87518"/>
</dbReference>
<dbReference type="RefSeq" id="NP_420979.1">
    <property type="nucleotide sequence ID" value="NC_002696.2"/>
</dbReference>
<dbReference type="SMR" id="Q9A6B8"/>
<dbReference type="STRING" id="190650.CC_2176"/>
<dbReference type="EnsemblBacteria" id="AAK24147">
    <property type="protein sequence ID" value="AAK24147"/>
    <property type="gene ID" value="CC_2176"/>
</dbReference>
<dbReference type="KEGG" id="ccr:CC_2176"/>
<dbReference type="PATRIC" id="fig|190650.5.peg.2194"/>
<dbReference type="eggNOG" id="COG0321">
    <property type="taxonomic scope" value="Bacteria"/>
</dbReference>
<dbReference type="HOGENOM" id="CLU_035168_3_0_5"/>
<dbReference type="BioCyc" id="CAULO:CC2176-MONOMER"/>
<dbReference type="UniPathway" id="UPA00538">
    <property type="reaction ID" value="UER00592"/>
</dbReference>
<dbReference type="Proteomes" id="UP000001816">
    <property type="component" value="Chromosome"/>
</dbReference>
<dbReference type="GO" id="GO:0005737">
    <property type="term" value="C:cytoplasm"/>
    <property type="evidence" value="ECO:0007669"/>
    <property type="project" value="UniProtKB-SubCell"/>
</dbReference>
<dbReference type="GO" id="GO:0033819">
    <property type="term" value="F:lipoyl(octanoyl) transferase activity"/>
    <property type="evidence" value="ECO:0007669"/>
    <property type="project" value="UniProtKB-EC"/>
</dbReference>
<dbReference type="GO" id="GO:0036211">
    <property type="term" value="P:protein modification process"/>
    <property type="evidence" value="ECO:0007669"/>
    <property type="project" value="InterPro"/>
</dbReference>
<dbReference type="CDD" id="cd16444">
    <property type="entry name" value="LipB"/>
    <property type="match status" value="1"/>
</dbReference>
<dbReference type="Gene3D" id="3.30.930.10">
    <property type="entry name" value="Bira Bifunctional Protein, Domain 2"/>
    <property type="match status" value="1"/>
</dbReference>
<dbReference type="HAMAP" id="MF_00013">
    <property type="entry name" value="LipB"/>
    <property type="match status" value="1"/>
</dbReference>
<dbReference type="InterPro" id="IPR045864">
    <property type="entry name" value="aa-tRNA-synth_II/BPL/LPL"/>
</dbReference>
<dbReference type="InterPro" id="IPR004143">
    <property type="entry name" value="BPL_LPL_catalytic"/>
</dbReference>
<dbReference type="InterPro" id="IPR000544">
    <property type="entry name" value="Octanoyltransferase"/>
</dbReference>
<dbReference type="InterPro" id="IPR020605">
    <property type="entry name" value="Octanoyltransferase_CS"/>
</dbReference>
<dbReference type="NCBIfam" id="TIGR00214">
    <property type="entry name" value="lipB"/>
    <property type="match status" value="1"/>
</dbReference>
<dbReference type="NCBIfam" id="NF010921">
    <property type="entry name" value="PRK14341.1"/>
    <property type="match status" value="1"/>
</dbReference>
<dbReference type="PANTHER" id="PTHR10993:SF7">
    <property type="entry name" value="LIPOYLTRANSFERASE 2, MITOCHONDRIAL-RELATED"/>
    <property type="match status" value="1"/>
</dbReference>
<dbReference type="PANTHER" id="PTHR10993">
    <property type="entry name" value="OCTANOYLTRANSFERASE"/>
    <property type="match status" value="1"/>
</dbReference>
<dbReference type="Pfam" id="PF21948">
    <property type="entry name" value="LplA-B_cat"/>
    <property type="match status" value="1"/>
</dbReference>
<dbReference type="PIRSF" id="PIRSF016262">
    <property type="entry name" value="LPLase"/>
    <property type="match status" value="1"/>
</dbReference>
<dbReference type="SUPFAM" id="SSF55681">
    <property type="entry name" value="Class II aaRS and biotin synthetases"/>
    <property type="match status" value="1"/>
</dbReference>
<dbReference type="PROSITE" id="PS51733">
    <property type="entry name" value="BPL_LPL_CATALYTIC"/>
    <property type="match status" value="1"/>
</dbReference>
<dbReference type="PROSITE" id="PS01313">
    <property type="entry name" value="LIPB"/>
    <property type="match status" value="1"/>
</dbReference>
<reference key="1">
    <citation type="journal article" date="2001" name="Proc. Natl. Acad. Sci. U.S.A.">
        <title>Complete genome sequence of Caulobacter crescentus.</title>
        <authorList>
            <person name="Nierman W.C."/>
            <person name="Feldblyum T.V."/>
            <person name="Laub M.T."/>
            <person name="Paulsen I.T."/>
            <person name="Nelson K.E."/>
            <person name="Eisen J.A."/>
            <person name="Heidelberg J.F."/>
            <person name="Alley M.R.K."/>
            <person name="Ohta N."/>
            <person name="Maddock J.R."/>
            <person name="Potocka I."/>
            <person name="Nelson W.C."/>
            <person name="Newton A."/>
            <person name="Stephens C."/>
            <person name="Phadke N.D."/>
            <person name="Ely B."/>
            <person name="DeBoy R.T."/>
            <person name="Dodson R.J."/>
            <person name="Durkin A.S."/>
            <person name="Gwinn M.L."/>
            <person name="Haft D.H."/>
            <person name="Kolonay J.F."/>
            <person name="Smit J."/>
            <person name="Craven M.B."/>
            <person name="Khouri H.M."/>
            <person name="Shetty J."/>
            <person name="Berry K.J."/>
            <person name="Utterback T.R."/>
            <person name="Tran K."/>
            <person name="Wolf A.M."/>
            <person name="Vamathevan J.J."/>
            <person name="Ermolaeva M.D."/>
            <person name="White O."/>
            <person name="Salzberg S.L."/>
            <person name="Venter J.C."/>
            <person name="Shapiro L."/>
            <person name="Fraser C.M."/>
        </authorList>
    </citation>
    <scope>NUCLEOTIDE SEQUENCE [LARGE SCALE GENOMIC DNA]</scope>
    <source>
        <strain>ATCC 19089 / CIP 103742 / CB 15</strain>
    </source>
</reference>
<sequence length="226" mass="24156">MRRDDAAPVGWAVSTQPVPYPAAVAAMEARAAAIADGTAGELIWLLEHPPLYTAGVSAKAGDLIQPDRFPVFESGRGGQFTYHGPGQRVAYVMLDLTQRGRDVRAFVAALEAWIIDALAAFNVTGELREGRVGVWVERKGAGWSREDKIAAIGVKLRRWVSFHGISLNVEPDLSHFSGIVPCGQTEHGVTSLVDLGLPVTLDDADAALRASFSKVFGPVEDAEAPV</sequence>
<organism>
    <name type="scientific">Caulobacter vibrioides (strain ATCC 19089 / CIP 103742 / CB 15)</name>
    <name type="common">Caulobacter crescentus</name>
    <dbReference type="NCBI Taxonomy" id="190650"/>
    <lineage>
        <taxon>Bacteria</taxon>
        <taxon>Pseudomonadati</taxon>
        <taxon>Pseudomonadota</taxon>
        <taxon>Alphaproteobacteria</taxon>
        <taxon>Caulobacterales</taxon>
        <taxon>Caulobacteraceae</taxon>
        <taxon>Caulobacter</taxon>
    </lineage>
</organism>
<accession>Q9A6B8</accession>
<feature type="chain" id="PRO_0000062825" description="Octanoyltransferase">
    <location>
        <begin position="1"/>
        <end position="226"/>
    </location>
</feature>
<feature type="domain" description="BPL/LPL catalytic" evidence="2">
    <location>
        <begin position="37"/>
        <end position="220"/>
    </location>
</feature>
<feature type="active site" description="Acyl-thioester intermediate" evidence="1">
    <location>
        <position position="182"/>
    </location>
</feature>
<feature type="binding site" evidence="1">
    <location>
        <begin position="76"/>
        <end position="83"/>
    </location>
    <ligand>
        <name>substrate</name>
    </ligand>
</feature>
<feature type="binding site" evidence="1">
    <location>
        <begin position="151"/>
        <end position="153"/>
    </location>
    <ligand>
        <name>substrate</name>
    </ligand>
</feature>
<feature type="binding site" evidence="1">
    <location>
        <begin position="164"/>
        <end position="166"/>
    </location>
    <ligand>
        <name>substrate</name>
    </ligand>
</feature>
<feature type="site" description="Lowers pKa of active site Cys" evidence="1">
    <location>
        <position position="148"/>
    </location>
</feature>
<name>LIPB_CAUVC</name>
<evidence type="ECO:0000255" key="1">
    <source>
        <dbReference type="HAMAP-Rule" id="MF_00013"/>
    </source>
</evidence>
<evidence type="ECO:0000255" key="2">
    <source>
        <dbReference type="PROSITE-ProRule" id="PRU01067"/>
    </source>
</evidence>
<proteinExistence type="inferred from homology"/>